<organism>
    <name type="scientific">Azobacteroides pseudotrichonymphae genomovar. CFP2</name>
    <dbReference type="NCBI Taxonomy" id="511995"/>
    <lineage>
        <taxon>Bacteria</taxon>
        <taxon>Pseudomonadati</taxon>
        <taxon>Bacteroidota</taxon>
        <taxon>Bacteroidia</taxon>
        <taxon>Bacteroidales</taxon>
        <taxon>Candidatus Azobacteroides</taxon>
    </lineage>
</organism>
<dbReference type="EC" id="6.3.4.4" evidence="1"/>
<dbReference type="EMBL" id="AP010656">
    <property type="protein sequence ID" value="BAG83667.1"/>
    <property type="molecule type" value="Genomic_DNA"/>
</dbReference>
<dbReference type="RefSeq" id="WP_012573428.1">
    <property type="nucleotide sequence ID" value="NC_011565.1"/>
</dbReference>
<dbReference type="SMR" id="B6YR45"/>
<dbReference type="STRING" id="511995.CFPG_404"/>
<dbReference type="KEGG" id="aps:CFPG_404"/>
<dbReference type="eggNOG" id="COG0104">
    <property type="taxonomic scope" value="Bacteria"/>
</dbReference>
<dbReference type="HOGENOM" id="CLU_029848_0_0_10"/>
<dbReference type="OrthoDB" id="9807553at2"/>
<dbReference type="UniPathway" id="UPA00075">
    <property type="reaction ID" value="UER00335"/>
</dbReference>
<dbReference type="Proteomes" id="UP000000723">
    <property type="component" value="Chromosome"/>
</dbReference>
<dbReference type="GO" id="GO:0005737">
    <property type="term" value="C:cytoplasm"/>
    <property type="evidence" value="ECO:0007669"/>
    <property type="project" value="UniProtKB-SubCell"/>
</dbReference>
<dbReference type="GO" id="GO:0004019">
    <property type="term" value="F:adenylosuccinate synthase activity"/>
    <property type="evidence" value="ECO:0007669"/>
    <property type="project" value="UniProtKB-UniRule"/>
</dbReference>
<dbReference type="GO" id="GO:0005525">
    <property type="term" value="F:GTP binding"/>
    <property type="evidence" value="ECO:0007669"/>
    <property type="project" value="UniProtKB-UniRule"/>
</dbReference>
<dbReference type="GO" id="GO:0000287">
    <property type="term" value="F:magnesium ion binding"/>
    <property type="evidence" value="ECO:0007669"/>
    <property type="project" value="UniProtKB-UniRule"/>
</dbReference>
<dbReference type="GO" id="GO:0044208">
    <property type="term" value="P:'de novo' AMP biosynthetic process"/>
    <property type="evidence" value="ECO:0007669"/>
    <property type="project" value="UniProtKB-UniRule"/>
</dbReference>
<dbReference type="GO" id="GO:0046040">
    <property type="term" value="P:IMP metabolic process"/>
    <property type="evidence" value="ECO:0007669"/>
    <property type="project" value="TreeGrafter"/>
</dbReference>
<dbReference type="CDD" id="cd03108">
    <property type="entry name" value="AdSS"/>
    <property type="match status" value="1"/>
</dbReference>
<dbReference type="FunFam" id="1.10.300.10:FF:000001">
    <property type="entry name" value="Adenylosuccinate synthetase"/>
    <property type="match status" value="1"/>
</dbReference>
<dbReference type="FunFam" id="3.90.170.10:FF:000001">
    <property type="entry name" value="Adenylosuccinate synthetase"/>
    <property type="match status" value="1"/>
</dbReference>
<dbReference type="Gene3D" id="3.40.440.10">
    <property type="entry name" value="Adenylosuccinate Synthetase, subunit A, domain 1"/>
    <property type="match status" value="1"/>
</dbReference>
<dbReference type="Gene3D" id="1.10.300.10">
    <property type="entry name" value="Adenylosuccinate Synthetase, subunit A, domain 2"/>
    <property type="match status" value="1"/>
</dbReference>
<dbReference type="Gene3D" id="3.90.170.10">
    <property type="entry name" value="Adenylosuccinate Synthetase, subunit A, domain 3"/>
    <property type="match status" value="1"/>
</dbReference>
<dbReference type="HAMAP" id="MF_00011">
    <property type="entry name" value="Adenylosucc_synth"/>
    <property type="match status" value="1"/>
</dbReference>
<dbReference type="InterPro" id="IPR018220">
    <property type="entry name" value="Adenylosuccin_syn_GTP-bd"/>
</dbReference>
<dbReference type="InterPro" id="IPR033128">
    <property type="entry name" value="Adenylosuccin_syn_Lys_AS"/>
</dbReference>
<dbReference type="InterPro" id="IPR042109">
    <property type="entry name" value="Adenylosuccinate_synth_dom1"/>
</dbReference>
<dbReference type="InterPro" id="IPR042110">
    <property type="entry name" value="Adenylosuccinate_synth_dom2"/>
</dbReference>
<dbReference type="InterPro" id="IPR042111">
    <property type="entry name" value="Adenylosuccinate_synth_dom3"/>
</dbReference>
<dbReference type="InterPro" id="IPR001114">
    <property type="entry name" value="Adenylosuccinate_synthetase"/>
</dbReference>
<dbReference type="InterPro" id="IPR027417">
    <property type="entry name" value="P-loop_NTPase"/>
</dbReference>
<dbReference type="NCBIfam" id="NF002223">
    <property type="entry name" value="PRK01117.1"/>
    <property type="match status" value="1"/>
</dbReference>
<dbReference type="NCBIfam" id="TIGR00184">
    <property type="entry name" value="purA"/>
    <property type="match status" value="1"/>
</dbReference>
<dbReference type="PANTHER" id="PTHR11846">
    <property type="entry name" value="ADENYLOSUCCINATE SYNTHETASE"/>
    <property type="match status" value="1"/>
</dbReference>
<dbReference type="PANTHER" id="PTHR11846:SF0">
    <property type="entry name" value="ADENYLOSUCCINATE SYNTHETASE"/>
    <property type="match status" value="1"/>
</dbReference>
<dbReference type="Pfam" id="PF00709">
    <property type="entry name" value="Adenylsucc_synt"/>
    <property type="match status" value="1"/>
</dbReference>
<dbReference type="SMART" id="SM00788">
    <property type="entry name" value="Adenylsucc_synt"/>
    <property type="match status" value="1"/>
</dbReference>
<dbReference type="SUPFAM" id="SSF52540">
    <property type="entry name" value="P-loop containing nucleoside triphosphate hydrolases"/>
    <property type="match status" value="1"/>
</dbReference>
<dbReference type="PROSITE" id="PS01266">
    <property type="entry name" value="ADENYLOSUCCIN_SYN_1"/>
    <property type="match status" value="1"/>
</dbReference>
<dbReference type="PROSITE" id="PS00513">
    <property type="entry name" value="ADENYLOSUCCIN_SYN_2"/>
    <property type="match status" value="1"/>
</dbReference>
<accession>B6YR45</accession>
<protein>
    <recommendedName>
        <fullName evidence="1">Adenylosuccinate synthetase</fullName>
        <shortName evidence="1">AMPSase</shortName>
        <shortName evidence="1">AdSS</shortName>
        <ecNumber evidence="1">6.3.4.4</ecNumber>
    </recommendedName>
    <alternativeName>
        <fullName evidence="1">IMP--aspartate ligase</fullName>
    </alternativeName>
</protein>
<sequence length="419" mass="46614">MKVSVLLGLQWGDEGKGKVVDVLTPKYDIVARFQGGPNAGHTLLFADRKYVLCSIPSGVFQGKVNIIGNGVVLDPILFKAETETLTSSCSNLVDKIYISRKAHLILPTHRLLDVAYETQKGNNKIGTTGKGIGPAYTDKVSRNGLRIGDIDYNFEEKYRYAIARHKELLHQMNFQYDLLPLEREWKKSIEVIKRFKRINSDNFINKALIGGRTVLAEGAQGTMLDVDFGSYPFVTSSNTICASACTGLGVAPAKIGDVFGIFKAYCTRVGSGPFPTELSDEIGEKLRNIGNEYGSITKRPRRCGWIDLVALRYAVMINGVTQLIMMKSDVLDTFDTVKACIAYEVNGQKMEDFPFEIGSSVKPIYTELVGWKTNMTKIKSENEFPKAFKDYLLFLEESLGVSIKIVSLGPDREQTIIRE</sequence>
<gene>
    <name evidence="1" type="primary">purA</name>
    <name type="ordered locus">CFPG_404</name>
</gene>
<comment type="function">
    <text evidence="1">Plays an important role in the de novo pathway of purine nucleotide biosynthesis. Catalyzes the first committed step in the biosynthesis of AMP from IMP.</text>
</comment>
<comment type="catalytic activity">
    <reaction evidence="1">
        <text>IMP + L-aspartate + GTP = N(6)-(1,2-dicarboxyethyl)-AMP + GDP + phosphate + 2 H(+)</text>
        <dbReference type="Rhea" id="RHEA:15753"/>
        <dbReference type="ChEBI" id="CHEBI:15378"/>
        <dbReference type="ChEBI" id="CHEBI:29991"/>
        <dbReference type="ChEBI" id="CHEBI:37565"/>
        <dbReference type="ChEBI" id="CHEBI:43474"/>
        <dbReference type="ChEBI" id="CHEBI:57567"/>
        <dbReference type="ChEBI" id="CHEBI:58053"/>
        <dbReference type="ChEBI" id="CHEBI:58189"/>
        <dbReference type="EC" id="6.3.4.4"/>
    </reaction>
</comment>
<comment type="cofactor">
    <cofactor evidence="1">
        <name>Mg(2+)</name>
        <dbReference type="ChEBI" id="CHEBI:18420"/>
    </cofactor>
    <text evidence="1">Binds 1 Mg(2+) ion per subunit.</text>
</comment>
<comment type="pathway">
    <text evidence="1">Purine metabolism; AMP biosynthesis via de novo pathway; AMP from IMP: step 1/2.</text>
</comment>
<comment type="subunit">
    <text evidence="1">Homodimer.</text>
</comment>
<comment type="subcellular location">
    <subcellularLocation>
        <location evidence="1">Cytoplasm</location>
    </subcellularLocation>
</comment>
<comment type="similarity">
    <text evidence="1">Belongs to the adenylosuccinate synthetase family.</text>
</comment>
<feature type="chain" id="PRO_1000089268" description="Adenylosuccinate synthetase">
    <location>
        <begin position="1"/>
        <end position="419"/>
    </location>
</feature>
<feature type="active site" description="Proton acceptor" evidence="1">
    <location>
        <position position="13"/>
    </location>
</feature>
<feature type="active site" description="Proton donor" evidence="1">
    <location>
        <position position="41"/>
    </location>
</feature>
<feature type="binding site" evidence="1">
    <location>
        <begin position="12"/>
        <end position="18"/>
    </location>
    <ligand>
        <name>GTP</name>
        <dbReference type="ChEBI" id="CHEBI:37565"/>
    </ligand>
</feature>
<feature type="binding site" description="in other chain" evidence="1">
    <location>
        <begin position="13"/>
        <end position="16"/>
    </location>
    <ligand>
        <name>IMP</name>
        <dbReference type="ChEBI" id="CHEBI:58053"/>
        <note>ligand shared between dimeric partners</note>
    </ligand>
</feature>
<feature type="binding site" evidence="1">
    <location>
        <position position="13"/>
    </location>
    <ligand>
        <name>Mg(2+)</name>
        <dbReference type="ChEBI" id="CHEBI:18420"/>
    </ligand>
</feature>
<feature type="binding site" description="in other chain" evidence="1">
    <location>
        <begin position="38"/>
        <end position="41"/>
    </location>
    <ligand>
        <name>IMP</name>
        <dbReference type="ChEBI" id="CHEBI:58053"/>
        <note>ligand shared between dimeric partners</note>
    </ligand>
</feature>
<feature type="binding site" evidence="1">
    <location>
        <begin position="40"/>
        <end position="42"/>
    </location>
    <ligand>
        <name>GTP</name>
        <dbReference type="ChEBI" id="CHEBI:37565"/>
    </ligand>
</feature>
<feature type="binding site" evidence="1">
    <location>
        <position position="40"/>
    </location>
    <ligand>
        <name>Mg(2+)</name>
        <dbReference type="ChEBI" id="CHEBI:18420"/>
    </ligand>
</feature>
<feature type="binding site" description="in other chain" evidence="1">
    <location>
        <position position="128"/>
    </location>
    <ligand>
        <name>IMP</name>
        <dbReference type="ChEBI" id="CHEBI:58053"/>
        <note>ligand shared between dimeric partners</note>
    </ligand>
</feature>
<feature type="binding site" evidence="1">
    <location>
        <position position="142"/>
    </location>
    <ligand>
        <name>IMP</name>
        <dbReference type="ChEBI" id="CHEBI:58053"/>
        <note>ligand shared between dimeric partners</note>
    </ligand>
</feature>
<feature type="binding site" description="in other chain" evidence="1">
    <location>
        <position position="220"/>
    </location>
    <ligand>
        <name>IMP</name>
        <dbReference type="ChEBI" id="CHEBI:58053"/>
        <note>ligand shared between dimeric partners</note>
    </ligand>
</feature>
<feature type="binding site" description="in other chain" evidence="1">
    <location>
        <position position="235"/>
    </location>
    <ligand>
        <name>IMP</name>
        <dbReference type="ChEBI" id="CHEBI:58053"/>
        <note>ligand shared between dimeric partners</note>
    </ligand>
</feature>
<feature type="binding site" evidence="1">
    <location>
        <begin position="295"/>
        <end position="301"/>
    </location>
    <ligand>
        <name>substrate</name>
    </ligand>
</feature>
<feature type="binding site" description="in other chain" evidence="1">
    <location>
        <position position="299"/>
    </location>
    <ligand>
        <name>IMP</name>
        <dbReference type="ChEBI" id="CHEBI:58053"/>
        <note>ligand shared between dimeric partners</note>
    </ligand>
</feature>
<feature type="binding site" evidence="1">
    <location>
        <position position="301"/>
    </location>
    <ligand>
        <name>GTP</name>
        <dbReference type="ChEBI" id="CHEBI:37565"/>
    </ligand>
</feature>
<feature type="binding site" evidence="1">
    <location>
        <begin position="327"/>
        <end position="329"/>
    </location>
    <ligand>
        <name>GTP</name>
        <dbReference type="ChEBI" id="CHEBI:37565"/>
    </ligand>
</feature>
<feature type="binding site" evidence="1">
    <location>
        <begin position="407"/>
        <end position="409"/>
    </location>
    <ligand>
        <name>GTP</name>
        <dbReference type="ChEBI" id="CHEBI:37565"/>
    </ligand>
</feature>
<evidence type="ECO:0000255" key="1">
    <source>
        <dbReference type="HAMAP-Rule" id="MF_00011"/>
    </source>
</evidence>
<proteinExistence type="inferred from homology"/>
<reference key="1">
    <citation type="journal article" date="2008" name="Science">
        <title>Genome of an endosymbiont coupling N2 fixation to cellulolysis within RT protist cells in termite gut.</title>
        <authorList>
            <person name="Hongoh Y."/>
            <person name="Sharma V.K."/>
            <person name="Prakash T."/>
            <person name="Noda S."/>
            <person name="Toh H."/>
            <person name="Taylor T.D."/>
            <person name="Kudo T."/>
            <person name="Sakaki Y."/>
            <person name="Toyoda A."/>
            <person name="Hattori M."/>
            <person name="Ohkuma M."/>
        </authorList>
    </citation>
    <scope>NUCLEOTIDE SEQUENCE [LARGE SCALE GENOMIC DNA]</scope>
</reference>
<keyword id="KW-0963">Cytoplasm</keyword>
<keyword id="KW-0342">GTP-binding</keyword>
<keyword id="KW-0436">Ligase</keyword>
<keyword id="KW-0460">Magnesium</keyword>
<keyword id="KW-0479">Metal-binding</keyword>
<keyword id="KW-0547">Nucleotide-binding</keyword>
<keyword id="KW-0658">Purine biosynthesis</keyword>
<keyword id="KW-1185">Reference proteome</keyword>
<name>PURA_AZOPC</name>